<proteinExistence type="inferred from homology"/>
<organism>
    <name type="scientific">Salinispora arenicola (strain CNS-205)</name>
    <dbReference type="NCBI Taxonomy" id="391037"/>
    <lineage>
        <taxon>Bacteria</taxon>
        <taxon>Bacillati</taxon>
        <taxon>Actinomycetota</taxon>
        <taxon>Actinomycetes</taxon>
        <taxon>Micromonosporales</taxon>
        <taxon>Micromonosporaceae</taxon>
        <taxon>Salinispora</taxon>
    </lineage>
</organism>
<protein>
    <recommendedName>
        <fullName evidence="1">Large ribosomal subunit protein bL35</fullName>
    </recommendedName>
    <alternativeName>
        <fullName evidence="3">50S ribosomal protein L35</fullName>
    </alternativeName>
</protein>
<keyword id="KW-0687">Ribonucleoprotein</keyword>
<keyword id="KW-0689">Ribosomal protein</keyword>
<accession>A8LY44</accession>
<feature type="chain" id="PRO_1000081622" description="Large ribosomal subunit protein bL35">
    <location>
        <begin position="1"/>
        <end position="64"/>
    </location>
</feature>
<feature type="region of interest" description="Disordered" evidence="2">
    <location>
        <begin position="1"/>
        <end position="39"/>
    </location>
</feature>
<feature type="compositionally biased region" description="Basic residues" evidence="2">
    <location>
        <begin position="1"/>
        <end position="22"/>
    </location>
</feature>
<sequence length="64" mass="7230">MPKMKSHTGMGKRVRVTGKGKIVKQQAGLRHNLEKKPSTRTRRLTGLVEVAKPDVKRIKKLLGR</sequence>
<gene>
    <name evidence="1" type="primary">rpmI</name>
    <name type="ordered locus">Sare_1876</name>
</gene>
<comment type="similarity">
    <text evidence="1">Belongs to the bacterial ribosomal protein bL35 family.</text>
</comment>
<evidence type="ECO:0000255" key="1">
    <source>
        <dbReference type="HAMAP-Rule" id="MF_00514"/>
    </source>
</evidence>
<evidence type="ECO:0000256" key="2">
    <source>
        <dbReference type="SAM" id="MobiDB-lite"/>
    </source>
</evidence>
<evidence type="ECO:0000305" key="3"/>
<reference key="1">
    <citation type="submission" date="2007-10" db="EMBL/GenBank/DDBJ databases">
        <title>Complete sequence of Salinispora arenicola CNS-205.</title>
        <authorList>
            <consortium name="US DOE Joint Genome Institute"/>
            <person name="Copeland A."/>
            <person name="Lucas S."/>
            <person name="Lapidus A."/>
            <person name="Barry K."/>
            <person name="Glavina del Rio T."/>
            <person name="Dalin E."/>
            <person name="Tice H."/>
            <person name="Pitluck S."/>
            <person name="Foster B."/>
            <person name="Schmutz J."/>
            <person name="Larimer F."/>
            <person name="Land M."/>
            <person name="Hauser L."/>
            <person name="Kyrpides N."/>
            <person name="Ivanova N."/>
            <person name="Jensen P.R."/>
            <person name="Moore B.S."/>
            <person name="Penn K."/>
            <person name="Jenkins C."/>
            <person name="Udwary D."/>
            <person name="Xiang L."/>
            <person name="Gontang E."/>
            <person name="Richardson P."/>
        </authorList>
    </citation>
    <scope>NUCLEOTIDE SEQUENCE [LARGE SCALE GENOMIC DNA]</scope>
    <source>
        <strain>CNS-205</strain>
    </source>
</reference>
<name>RL35_SALAI</name>
<dbReference type="EMBL" id="CP000850">
    <property type="protein sequence ID" value="ABV97761.1"/>
    <property type="molecule type" value="Genomic_DNA"/>
</dbReference>
<dbReference type="SMR" id="A8LY44"/>
<dbReference type="STRING" id="391037.Sare_1876"/>
<dbReference type="KEGG" id="saq:Sare_1876"/>
<dbReference type="PATRIC" id="fig|391037.6.peg.1904"/>
<dbReference type="eggNOG" id="COG0291">
    <property type="taxonomic scope" value="Bacteria"/>
</dbReference>
<dbReference type="HOGENOM" id="CLU_169643_4_2_11"/>
<dbReference type="OrthoDB" id="9804851at2"/>
<dbReference type="GO" id="GO:0022625">
    <property type="term" value="C:cytosolic large ribosomal subunit"/>
    <property type="evidence" value="ECO:0007669"/>
    <property type="project" value="TreeGrafter"/>
</dbReference>
<dbReference type="GO" id="GO:0003735">
    <property type="term" value="F:structural constituent of ribosome"/>
    <property type="evidence" value="ECO:0007669"/>
    <property type="project" value="InterPro"/>
</dbReference>
<dbReference type="GO" id="GO:0006412">
    <property type="term" value="P:translation"/>
    <property type="evidence" value="ECO:0007669"/>
    <property type="project" value="UniProtKB-UniRule"/>
</dbReference>
<dbReference type="FunFam" id="4.10.410.60:FF:000001">
    <property type="entry name" value="50S ribosomal protein L35"/>
    <property type="match status" value="1"/>
</dbReference>
<dbReference type="Gene3D" id="4.10.410.60">
    <property type="match status" value="1"/>
</dbReference>
<dbReference type="HAMAP" id="MF_00514">
    <property type="entry name" value="Ribosomal_bL35"/>
    <property type="match status" value="1"/>
</dbReference>
<dbReference type="InterPro" id="IPR001706">
    <property type="entry name" value="Ribosomal_bL35"/>
</dbReference>
<dbReference type="InterPro" id="IPR021137">
    <property type="entry name" value="Ribosomal_bL35-like"/>
</dbReference>
<dbReference type="InterPro" id="IPR037229">
    <property type="entry name" value="Ribosomal_bL35_sf"/>
</dbReference>
<dbReference type="NCBIfam" id="TIGR00001">
    <property type="entry name" value="rpmI_bact"/>
    <property type="match status" value="1"/>
</dbReference>
<dbReference type="PANTHER" id="PTHR33343">
    <property type="entry name" value="54S RIBOSOMAL PROTEIN BL35M"/>
    <property type="match status" value="1"/>
</dbReference>
<dbReference type="PANTHER" id="PTHR33343:SF1">
    <property type="entry name" value="LARGE RIBOSOMAL SUBUNIT PROTEIN BL35M"/>
    <property type="match status" value="1"/>
</dbReference>
<dbReference type="Pfam" id="PF01632">
    <property type="entry name" value="Ribosomal_L35p"/>
    <property type="match status" value="1"/>
</dbReference>
<dbReference type="PRINTS" id="PR00064">
    <property type="entry name" value="RIBOSOMALL35"/>
</dbReference>
<dbReference type="SUPFAM" id="SSF143034">
    <property type="entry name" value="L35p-like"/>
    <property type="match status" value="1"/>
</dbReference>